<reference key="1">
    <citation type="journal article" date="2007" name="PLoS Genet.">
        <title>Patterns and implications of gene gain and loss in the evolution of Prochlorococcus.</title>
        <authorList>
            <person name="Kettler G.C."/>
            <person name="Martiny A.C."/>
            <person name="Huang K."/>
            <person name="Zucker J."/>
            <person name="Coleman M.L."/>
            <person name="Rodrigue S."/>
            <person name="Chen F."/>
            <person name="Lapidus A."/>
            <person name="Ferriera S."/>
            <person name="Johnson J."/>
            <person name="Steglich C."/>
            <person name="Church G.M."/>
            <person name="Richardson P."/>
            <person name="Chisholm S.W."/>
        </authorList>
    </citation>
    <scope>NUCLEOTIDE SEQUENCE [LARGE SCALE GENOMIC DNA]</scope>
    <source>
        <strain>MIT 9215</strain>
    </source>
</reference>
<organism>
    <name type="scientific">Prochlorococcus marinus (strain MIT 9215)</name>
    <dbReference type="NCBI Taxonomy" id="93060"/>
    <lineage>
        <taxon>Bacteria</taxon>
        <taxon>Bacillati</taxon>
        <taxon>Cyanobacteriota</taxon>
        <taxon>Cyanophyceae</taxon>
        <taxon>Synechococcales</taxon>
        <taxon>Prochlorococcaceae</taxon>
        <taxon>Prochlorococcus</taxon>
    </lineage>
</organism>
<gene>
    <name evidence="1" type="primary">ispF</name>
    <name type="ordered locus">P9215_15051</name>
</gene>
<keyword id="KW-0414">Isoprene biosynthesis</keyword>
<keyword id="KW-0456">Lyase</keyword>
<keyword id="KW-0479">Metal-binding</keyword>
<dbReference type="EC" id="4.6.1.12" evidence="1"/>
<dbReference type="EMBL" id="CP000825">
    <property type="protein sequence ID" value="ABV51118.1"/>
    <property type="molecule type" value="Genomic_DNA"/>
</dbReference>
<dbReference type="RefSeq" id="WP_012008165.1">
    <property type="nucleotide sequence ID" value="NC_009840.1"/>
</dbReference>
<dbReference type="SMR" id="A8G687"/>
<dbReference type="STRING" id="93060.P9215_15051"/>
<dbReference type="KEGG" id="pmh:P9215_15051"/>
<dbReference type="eggNOG" id="COG0245">
    <property type="taxonomic scope" value="Bacteria"/>
</dbReference>
<dbReference type="HOGENOM" id="CLU_084630_2_0_3"/>
<dbReference type="OrthoDB" id="9807416at2"/>
<dbReference type="UniPathway" id="UPA00056">
    <property type="reaction ID" value="UER00095"/>
</dbReference>
<dbReference type="Proteomes" id="UP000002014">
    <property type="component" value="Chromosome"/>
</dbReference>
<dbReference type="GO" id="GO:0008685">
    <property type="term" value="F:2-C-methyl-D-erythritol 2,4-cyclodiphosphate synthase activity"/>
    <property type="evidence" value="ECO:0007669"/>
    <property type="project" value="UniProtKB-UniRule"/>
</dbReference>
<dbReference type="GO" id="GO:0046872">
    <property type="term" value="F:metal ion binding"/>
    <property type="evidence" value="ECO:0007669"/>
    <property type="project" value="UniProtKB-KW"/>
</dbReference>
<dbReference type="GO" id="GO:0019288">
    <property type="term" value="P:isopentenyl diphosphate biosynthetic process, methylerythritol 4-phosphate pathway"/>
    <property type="evidence" value="ECO:0007669"/>
    <property type="project" value="UniProtKB-UniRule"/>
</dbReference>
<dbReference type="GO" id="GO:0016114">
    <property type="term" value="P:terpenoid biosynthetic process"/>
    <property type="evidence" value="ECO:0007669"/>
    <property type="project" value="InterPro"/>
</dbReference>
<dbReference type="CDD" id="cd00554">
    <property type="entry name" value="MECDP_synthase"/>
    <property type="match status" value="1"/>
</dbReference>
<dbReference type="FunFam" id="3.30.1330.50:FF:000003">
    <property type="entry name" value="2-C-methyl-D-erythritol 2,4-cyclodiphosphate synthase"/>
    <property type="match status" value="1"/>
</dbReference>
<dbReference type="Gene3D" id="3.30.1330.50">
    <property type="entry name" value="2-C-methyl-D-erythritol 2,4-cyclodiphosphate synthase"/>
    <property type="match status" value="1"/>
</dbReference>
<dbReference type="HAMAP" id="MF_00107">
    <property type="entry name" value="IspF"/>
    <property type="match status" value="1"/>
</dbReference>
<dbReference type="InterPro" id="IPR003526">
    <property type="entry name" value="MECDP_synthase"/>
</dbReference>
<dbReference type="InterPro" id="IPR020555">
    <property type="entry name" value="MECDP_synthase_CS"/>
</dbReference>
<dbReference type="InterPro" id="IPR036571">
    <property type="entry name" value="MECDP_synthase_sf"/>
</dbReference>
<dbReference type="NCBIfam" id="TIGR00151">
    <property type="entry name" value="ispF"/>
    <property type="match status" value="1"/>
</dbReference>
<dbReference type="PANTHER" id="PTHR43181">
    <property type="entry name" value="2-C-METHYL-D-ERYTHRITOL 2,4-CYCLODIPHOSPHATE SYNTHASE, CHLOROPLASTIC"/>
    <property type="match status" value="1"/>
</dbReference>
<dbReference type="PANTHER" id="PTHR43181:SF1">
    <property type="entry name" value="2-C-METHYL-D-ERYTHRITOL 2,4-CYCLODIPHOSPHATE SYNTHASE, CHLOROPLASTIC"/>
    <property type="match status" value="1"/>
</dbReference>
<dbReference type="Pfam" id="PF02542">
    <property type="entry name" value="YgbB"/>
    <property type="match status" value="1"/>
</dbReference>
<dbReference type="SUPFAM" id="SSF69765">
    <property type="entry name" value="IpsF-like"/>
    <property type="match status" value="1"/>
</dbReference>
<dbReference type="PROSITE" id="PS01350">
    <property type="entry name" value="ISPF"/>
    <property type="match status" value="1"/>
</dbReference>
<feature type="chain" id="PRO_1000057712" description="2-C-methyl-D-erythritol 2,4-cyclodiphosphate synthase">
    <location>
        <begin position="1"/>
        <end position="166"/>
    </location>
</feature>
<feature type="binding site" evidence="1">
    <location>
        <begin position="15"/>
        <end position="17"/>
    </location>
    <ligand>
        <name>4-CDP-2-C-methyl-D-erythritol 2-phosphate</name>
        <dbReference type="ChEBI" id="CHEBI:57919"/>
    </ligand>
</feature>
<feature type="binding site" evidence="1">
    <location>
        <position position="15"/>
    </location>
    <ligand>
        <name>a divalent metal cation</name>
        <dbReference type="ChEBI" id="CHEBI:60240"/>
    </ligand>
</feature>
<feature type="binding site" evidence="1">
    <location>
        <position position="17"/>
    </location>
    <ligand>
        <name>a divalent metal cation</name>
        <dbReference type="ChEBI" id="CHEBI:60240"/>
    </ligand>
</feature>
<feature type="binding site" evidence="1">
    <location>
        <begin position="43"/>
        <end position="44"/>
    </location>
    <ligand>
        <name>4-CDP-2-C-methyl-D-erythritol 2-phosphate</name>
        <dbReference type="ChEBI" id="CHEBI:57919"/>
    </ligand>
</feature>
<feature type="binding site" evidence="1">
    <location>
        <position position="51"/>
    </location>
    <ligand>
        <name>a divalent metal cation</name>
        <dbReference type="ChEBI" id="CHEBI:60240"/>
    </ligand>
</feature>
<feature type="binding site" evidence="1">
    <location>
        <begin position="65"/>
        <end position="67"/>
    </location>
    <ligand>
        <name>4-CDP-2-C-methyl-D-erythritol 2-phosphate</name>
        <dbReference type="ChEBI" id="CHEBI:57919"/>
    </ligand>
</feature>
<feature type="binding site" evidence="1">
    <location>
        <begin position="141"/>
        <end position="144"/>
    </location>
    <ligand>
        <name>4-CDP-2-C-methyl-D-erythritol 2-phosphate</name>
        <dbReference type="ChEBI" id="CHEBI:57919"/>
    </ligand>
</feature>
<feature type="binding site" evidence="1">
    <location>
        <position position="151"/>
    </location>
    <ligand>
        <name>4-CDP-2-C-methyl-D-erythritol 2-phosphate</name>
        <dbReference type="ChEBI" id="CHEBI:57919"/>
    </ligand>
</feature>
<feature type="site" description="Transition state stabilizer" evidence="1">
    <location>
        <position position="43"/>
    </location>
</feature>
<feature type="site" description="Transition state stabilizer" evidence="1">
    <location>
        <position position="142"/>
    </location>
</feature>
<evidence type="ECO:0000255" key="1">
    <source>
        <dbReference type="HAMAP-Rule" id="MF_00107"/>
    </source>
</evidence>
<name>ISPF_PROM2</name>
<proteinExistence type="inferred from homology"/>
<sequence>MTSKSPKFRIGNGYDIHRLEIGRKLIIGGVKLNHPDNLGLDGHSDADVLSHSIMDALLGALSLGDIGKYFPPSDEKWKDVDSLILLSKVIDLVRKQGWEINNIDSVIVAERPKIKPYVEIMKRNLSKTLKIDDSFIGIKATTNEKLGPEGREEGISCHSVVLLEKK</sequence>
<protein>
    <recommendedName>
        <fullName evidence="1">2-C-methyl-D-erythritol 2,4-cyclodiphosphate synthase</fullName>
        <shortName evidence="1">MECDP-synthase</shortName>
        <shortName evidence="1">MECPP-synthase</shortName>
        <shortName evidence="1">MECPS</shortName>
        <ecNumber evidence="1">4.6.1.12</ecNumber>
    </recommendedName>
</protein>
<accession>A8G687</accession>
<comment type="function">
    <text evidence="1">Involved in the biosynthesis of isopentenyl diphosphate (IPP) and dimethylallyl diphosphate (DMAPP), two major building blocks of isoprenoid compounds. Catalyzes the conversion of 4-diphosphocytidyl-2-C-methyl-D-erythritol 2-phosphate (CDP-ME2P) to 2-C-methyl-D-erythritol 2,4-cyclodiphosphate (ME-CPP) with a corresponding release of cytidine 5-monophosphate (CMP).</text>
</comment>
<comment type="catalytic activity">
    <reaction evidence="1">
        <text>4-CDP-2-C-methyl-D-erythritol 2-phosphate = 2-C-methyl-D-erythritol 2,4-cyclic diphosphate + CMP</text>
        <dbReference type="Rhea" id="RHEA:23864"/>
        <dbReference type="ChEBI" id="CHEBI:57919"/>
        <dbReference type="ChEBI" id="CHEBI:58483"/>
        <dbReference type="ChEBI" id="CHEBI:60377"/>
        <dbReference type="EC" id="4.6.1.12"/>
    </reaction>
</comment>
<comment type="cofactor">
    <cofactor evidence="1">
        <name>a divalent metal cation</name>
        <dbReference type="ChEBI" id="CHEBI:60240"/>
    </cofactor>
    <text evidence="1">Binds 1 divalent metal cation per subunit.</text>
</comment>
<comment type="pathway">
    <text evidence="1">Isoprenoid biosynthesis; isopentenyl diphosphate biosynthesis via DXP pathway; isopentenyl diphosphate from 1-deoxy-D-xylulose 5-phosphate: step 4/6.</text>
</comment>
<comment type="subunit">
    <text evidence="1">Homotrimer.</text>
</comment>
<comment type="similarity">
    <text evidence="1">Belongs to the IspF family.</text>
</comment>